<dbReference type="EC" id="1.14.11.-"/>
<dbReference type="EC" id="1.14.11.27"/>
<dbReference type="EMBL" id="CH916371">
    <property type="protein sequence ID" value="EDV91995.1"/>
    <property type="molecule type" value="Genomic_DNA"/>
</dbReference>
<dbReference type="SMR" id="B4JMQ2"/>
<dbReference type="FunCoup" id="B4JMQ2">
    <property type="interactions" value="1885"/>
</dbReference>
<dbReference type="STRING" id="7222.B4JMQ2"/>
<dbReference type="EnsemblMetazoa" id="FBtr0159699">
    <property type="protein sequence ID" value="FBpp0158191"/>
    <property type="gene ID" value="FBgn0131741"/>
</dbReference>
<dbReference type="EnsemblMetazoa" id="XM_001992252.2">
    <property type="protein sequence ID" value="XP_001992288.1"/>
    <property type="gene ID" value="LOC6565600"/>
</dbReference>
<dbReference type="GeneID" id="6565600"/>
<dbReference type="KEGG" id="dgr:6565600"/>
<dbReference type="CTD" id="31374"/>
<dbReference type="eggNOG" id="KOG3706">
    <property type="taxonomic scope" value="Eukaryota"/>
</dbReference>
<dbReference type="HOGENOM" id="CLU_013645_2_0_1"/>
<dbReference type="InParanoid" id="B4JMQ2"/>
<dbReference type="OrthoDB" id="425950at2759"/>
<dbReference type="PhylomeDB" id="B4JMQ2"/>
<dbReference type="Proteomes" id="UP000001070">
    <property type="component" value="Unassembled WGS sequence"/>
</dbReference>
<dbReference type="GO" id="GO:0005730">
    <property type="term" value="C:nucleolus"/>
    <property type="evidence" value="ECO:0007669"/>
    <property type="project" value="EnsemblMetazoa"/>
</dbReference>
<dbReference type="GO" id="GO:0005634">
    <property type="term" value="C:nucleus"/>
    <property type="evidence" value="ECO:0000250"/>
    <property type="project" value="UniProtKB"/>
</dbReference>
<dbReference type="GO" id="GO:0016706">
    <property type="term" value="F:2-oxoglutarate-dependent dioxygenase activity"/>
    <property type="evidence" value="ECO:0000250"/>
    <property type="project" value="UniProtKB"/>
</dbReference>
<dbReference type="GO" id="GO:0051864">
    <property type="term" value="F:histone H3K36 demethylase activity"/>
    <property type="evidence" value="ECO:0000250"/>
    <property type="project" value="UniProtKB"/>
</dbReference>
<dbReference type="GO" id="GO:0140680">
    <property type="term" value="F:histone H3K36me/H3K36me2 demethylase activity"/>
    <property type="evidence" value="ECO:0007669"/>
    <property type="project" value="UniProtKB-EC"/>
</dbReference>
<dbReference type="GO" id="GO:0034647">
    <property type="term" value="F:histone H3K4me/H3K4me2/H3K4me3 demethylase activity"/>
    <property type="evidence" value="ECO:0000250"/>
    <property type="project" value="UniProtKB"/>
</dbReference>
<dbReference type="GO" id="GO:0005506">
    <property type="term" value="F:iron ion binding"/>
    <property type="evidence" value="ECO:0000250"/>
    <property type="project" value="UniProtKB"/>
</dbReference>
<dbReference type="GO" id="GO:0048149">
    <property type="term" value="P:behavioral response to ethanol"/>
    <property type="evidence" value="ECO:0007669"/>
    <property type="project" value="EnsemblMetazoa"/>
</dbReference>
<dbReference type="GO" id="GO:0048512">
    <property type="term" value="P:circadian behavior"/>
    <property type="evidence" value="ECO:0007669"/>
    <property type="project" value="EnsemblMetazoa"/>
</dbReference>
<dbReference type="GO" id="GO:0045892">
    <property type="term" value="P:negative regulation of DNA-templated transcription"/>
    <property type="evidence" value="ECO:0000250"/>
    <property type="project" value="UniProtKB"/>
</dbReference>
<dbReference type="FunFam" id="2.60.120.650:FF:000013">
    <property type="entry name" value="Ribosomal oxygenase 1"/>
    <property type="match status" value="1"/>
</dbReference>
<dbReference type="FunFam" id="1.10.10.1500:FF:000001">
    <property type="entry name" value="ribosomal oxygenase 1 isoform X1"/>
    <property type="match status" value="1"/>
</dbReference>
<dbReference type="FunFam" id="3.90.930.40:FF:000001">
    <property type="entry name" value="ribosomal oxygenase 1 isoform X1"/>
    <property type="match status" value="1"/>
</dbReference>
<dbReference type="Gene3D" id="3.90.930.40">
    <property type="match status" value="1"/>
</dbReference>
<dbReference type="Gene3D" id="2.60.120.650">
    <property type="entry name" value="Cupin"/>
    <property type="match status" value="1"/>
</dbReference>
<dbReference type="Gene3D" id="1.10.10.1500">
    <property type="entry name" value="JmjC domain-containing ribosomal oxygenase (ROX), dimer domain"/>
    <property type="match status" value="1"/>
</dbReference>
<dbReference type="InterPro" id="IPR003347">
    <property type="entry name" value="JmjC_dom"/>
</dbReference>
<dbReference type="InterPro" id="IPR039994">
    <property type="entry name" value="NO66-like"/>
</dbReference>
<dbReference type="InterPro" id="IPR049043">
    <property type="entry name" value="RIOX1/NO66-like_C_WH"/>
</dbReference>
<dbReference type="PANTHER" id="PTHR13096">
    <property type="entry name" value="MINA53 MYC INDUCED NUCLEAR ANTIGEN"/>
    <property type="match status" value="1"/>
</dbReference>
<dbReference type="PANTHER" id="PTHR13096:SF8">
    <property type="entry name" value="RIBOSOMAL OXYGENASE 1"/>
    <property type="match status" value="1"/>
</dbReference>
<dbReference type="Pfam" id="PF08007">
    <property type="entry name" value="JmjC_2"/>
    <property type="match status" value="1"/>
</dbReference>
<dbReference type="Pfam" id="PF21233">
    <property type="entry name" value="RIOX1_C_WH"/>
    <property type="match status" value="1"/>
</dbReference>
<dbReference type="SUPFAM" id="SSF51197">
    <property type="entry name" value="Clavaminate synthase-like"/>
    <property type="match status" value="1"/>
</dbReference>
<dbReference type="PROSITE" id="PS51184">
    <property type="entry name" value="JMJC"/>
    <property type="match status" value="1"/>
</dbReference>
<reference key="1">
    <citation type="journal article" date="2007" name="Nature">
        <title>Evolution of genes and genomes on the Drosophila phylogeny.</title>
        <authorList>
            <consortium name="Drosophila 12 genomes consortium"/>
        </authorList>
    </citation>
    <scope>NUCLEOTIDE SEQUENCE [LARGE SCALE GENOMIC DNA]</scope>
    <source>
        <strain>Tucson 15287-2541.00</strain>
    </source>
</reference>
<accession>B4JMQ2</accession>
<keyword id="KW-0156">Chromatin regulator</keyword>
<keyword id="KW-0223">Dioxygenase</keyword>
<keyword id="KW-0408">Iron</keyword>
<keyword id="KW-0479">Metal-binding</keyword>
<keyword id="KW-0539">Nucleus</keyword>
<keyword id="KW-0560">Oxidoreductase</keyword>
<keyword id="KW-1185">Reference proteome</keyword>
<keyword id="KW-0678">Repressor</keyword>
<keyword id="KW-0804">Transcription</keyword>
<keyword id="KW-0805">Transcription regulation</keyword>
<gene>
    <name type="ORF">GH24285</name>
</gene>
<proteinExistence type="inferred from homology"/>
<evidence type="ECO:0000250" key="1"/>
<evidence type="ECO:0000255" key="2">
    <source>
        <dbReference type="PROSITE-ProRule" id="PRU00538"/>
    </source>
</evidence>
<evidence type="ECO:0000256" key="3">
    <source>
        <dbReference type="SAM" id="MobiDB-lite"/>
    </source>
</evidence>
<evidence type="ECO:0000305" key="4"/>
<comment type="function">
    <text evidence="1">Oxygenase that can act as both a histone lysine demethylase and a ribosomal histidine hydroxylase. Specifically demethylates 'Lys-4' (H3K4me) and 'Lys-36' (H3K36me) of histone H3, thereby playing a central role in histone code (By similarity).</text>
</comment>
<comment type="catalytic activity">
    <reaction>
        <text>N(6),N(6)-dimethyl-L-lysyl(36)-[histone H3] + 2 2-oxoglutarate + 2 O2 = L-lysyl(36)-[histone H3] + 2 formaldehyde + 2 succinate + 2 CO2</text>
        <dbReference type="Rhea" id="RHEA:42032"/>
        <dbReference type="Rhea" id="RHEA-COMP:9785"/>
        <dbReference type="Rhea" id="RHEA-COMP:9787"/>
        <dbReference type="ChEBI" id="CHEBI:15379"/>
        <dbReference type="ChEBI" id="CHEBI:16526"/>
        <dbReference type="ChEBI" id="CHEBI:16810"/>
        <dbReference type="ChEBI" id="CHEBI:16842"/>
        <dbReference type="ChEBI" id="CHEBI:29969"/>
        <dbReference type="ChEBI" id="CHEBI:30031"/>
        <dbReference type="ChEBI" id="CHEBI:61976"/>
        <dbReference type="EC" id="1.14.11.27"/>
    </reaction>
</comment>
<comment type="cofactor">
    <cofactor evidence="1">
        <name>Fe(2+)</name>
        <dbReference type="ChEBI" id="CHEBI:29033"/>
    </cofactor>
    <text evidence="1">Binds 1 Fe(2+) ion per subunit.</text>
</comment>
<comment type="subcellular location">
    <subcellularLocation>
        <location evidence="1">Nucleus</location>
    </subcellularLocation>
</comment>
<comment type="similarity">
    <text evidence="4">Belongs to the ROX family. NO66 subfamily.</text>
</comment>
<feature type="chain" id="PRO_0000390986" description="Bifunctional lysine-specific demethylase and histidyl-hydroxylase NO66">
    <location>
        <begin position="1"/>
        <end position="723"/>
    </location>
</feature>
<feature type="domain" description="JmjC" evidence="2">
    <location>
        <begin position="379"/>
        <end position="518"/>
    </location>
</feature>
<feature type="region of interest" description="Disordered" evidence="3">
    <location>
        <begin position="13"/>
        <end position="34"/>
    </location>
</feature>
<feature type="region of interest" description="Disordered" evidence="3">
    <location>
        <begin position="48"/>
        <end position="213"/>
    </location>
</feature>
<feature type="compositionally biased region" description="Basic residues" evidence="3">
    <location>
        <begin position="14"/>
        <end position="31"/>
    </location>
</feature>
<feature type="compositionally biased region" description="Low complexity" evidence="3">
    <location>
        <begin position="49"/>
        <end position="72"/>
    </location>
</feature>
<feature type="compositionally biased region" description="Acidic residues" evidence="3">
    <location>
        <begin position="88"/>
        <end position="106"/>
    </location>
</feature>
<feature type="compositionally biased region" description="Acidic residues" evidence="3">
    <location>
        <begin position="114"/>
        <end position="129"/>
    </location>
</feature>
<feature type="compositionally biased region" description="Low complexity" evidence="3">
    <location>
        <begin position="133"/>
        <end position="155"/>
    </location>
</feature>
<feature type="compositionally biased region" description="Basic and acidic residues" evidence="3">
    <location>
        <begin position="190"/>
        <end position="199"/>
    </location>
</feature>
<feature type="compositionally biased region" description="Low complexity" evidence="3">
    <location>
        <begin position="204"/>
        <end position="213"/>
    </location>
</feature>
<feature type="binding site" evidence="2">
    <location>
        <position position="419"/>
    </location>
    <ligand>
        <name>Fe cation</name>
        <dbReference type="ChEBI" id="CHEBI:24875"/>
        <note>catalytic</note>
    </ligand>
</feature>
<feature type="binding site" evidence="2">
    <location>
        <position position="421"/>
    </location>
    <ligand>
        <name>Fe cation</name>
        <dbReference type="ChEBI" id="CHEBI:24875"/>
        <note>catalytic</note>
    </ligand>
</feature>
<feature type="binding site" evidence="2">
    <location>
        <position position="484"/>
    </location>
    <ligand>
        <name>Fe cation</name>
        <dbReference type="ChEBI" id="CHEBI:24875"/>
        <note>catalytic</note>
    </ligand>
</feature>
<name>NO66_DROGR</name>
<organism>
    <name type="scientific">Drosophila grimshawi</name>
    <name type="common">Hawaiian fruit fly</name>
    <name type="synonym">Idiomyia grimshawi</name>
    <dbReference type="NCBI Taxonomy" id="7222"/>
    <lineage>
        <taxon>Eukaryota</taxon>
        <taxon>Metazoa</taxon>
        <taxon>Ecdysozoa</taxon>
        <taxon>Arthropoda</taxon>
        <taxon>Hexapoda</taxon>
        <taxon>Insecta</taxon>
        <taxon>Pterygota</taxon>
        <taxon>Neoptera</taxon>
        <taxon>Endopterygota</taxon>
        <taxon>Diptera</taxon>
        <taxon>Brachycera</taxon>
        <taxon>Muscomorpha</taxon>
        <taxon>Ephydroidea</taxon>
        <taxon>Drosophilidae</taxon>
        <taxon>Drosophila</taxon>
        <taxon>Hawaiian Drosophila</taxon>
    </lineage>
</organism>
<sequence length="723" mass="80068">MDEMSAYVAYGMKKTAKKPAKKTTKQNRQKQKAANIYSLATSTPAKISAVKQNNGAKGKAKANGVKGNAKAQTTKDSATNSVAKMADESVDDYSSDSSYDEDEDNEELSHSSNEDDYGSELSSGEEFEEYTLNSPSGSCSCSASSGSSNTENSPPAATSSRTPKKRSTGDMDDNNNKSPAVKQQKLQPQEQKEGKELSKKGSRKSAPAAAPSCPLLRLSGNAAAIKSSAMPSKATAEKRKSCPLPKKMAAAGKGVAVVKQEPKAKVESVQNGGVEDSVERGICVLGALLDPLSLDDFFSRYWESKACQVKRKRKDLYSDLVSFEMIDEMLIENHLEFTTNIDVTSYKDGVRQTHNPDGRAMPPTVWGHYSDGCSVRILNPSTYLKGLRGVCAALQEHFHCLVGANVYLTPPNSQGFAPHYDDIEAFVLQVEGRKRWRLYDAPSPNDVLARTSSGNLKQQQLSKPIFDEVLEAGDLLYFPRGCVHQAVTEQQHHSLHITLSVYQQQSYANLMEALMPAVLQNAIKHNLDMRRGLPLGTWHHLGMVHGDKKTKERSDLITHTQSLFSKYLAPTASQIDAAVDQLAIRFQHEALPPRIASSEKKRTVFGSRNKKDKHGNCRCDYDLTEQTKIRLLRQNIVRLVAQEENSLRLYYYVDNALEYCKYEANFMEIDRVEANAIKMLINSYPKYVSISSLPLPNVEHCLDTATGLWERGLLITEEPFKKN</sequence>
<protein>
    <recommendedName>
        <fullName>Bifunctional lysine-specific demethylase and histidyl-hydroxylase NO66</fullName>
        <ecNumber>1.14.11.-</ecNumber>
        <ecNumber>1.14.11.27</ecNumber>
    </recommendedName>
    <alternativeName>
        <fullName>Histone lysine demethylase NO66</fullName>
    </alternativeName>
</protein>